<proteinExistence type="inferred from homology"/>
<dbReference type="EC" id="3.5.3.11" evidence="1"/>
<dbReference type="EMBL" id="CP000468">
    <property type="protein sequence ID" value="ABJ02365.1"/>
    <property type="molecule type" value="Genomic_DNA"/>
</dbReference>
<dbReference type="RefSeq" id="WP_000105562.1">
    <property type="nucleotide sequence ID" value="NZ_CADILS010000010.1"/>
</dbReference>
<dbReference type="SMR" id="A1AFC5"/>
<dbReference type="KEGG" id="ecv:APECO1_3592"/>
<dbReference type="HOGENOM" id="CLU_039478_0_0_6"/>
<dbReference type="UniPathway" id="UPA00534">
    <property type="reaction ID" value="UER00287"/>
</dbReference>
<dbReference type="Proteomes" id="UP000008216">
    <property type="component" value="Chromosome"/>
</dbReference>
<dbReference type="GO" id="GO:0008783">
    <property type="term" value="F:agmatinase activity"/>
    <property type="evidence" value="ECO:0007669"/>
    <property type="project" value="UniProtKB-UniRule"/>
</dbReference>
<dbReference type="GO" id="GO:0030145">
    <property type="term" value="F:manganese ion binding"/>
    <property type="evidence" value="ECO:0007669"/>
    <property type="project" value="InterPro"/>
</dbReference>
<dbReference type="GO" id="GO:0033389">
    <property type="term" value="P:putrescine biosynthetic process from arginine, via agmatine"/>
    <property type="evidence" value="ECO:0007669"/>
    <property type="project" value="TreeGrafter"/>
</dbReference>
<dbReference type="GO" id="GO:0008295">
    <property type="term" value="P:spermidine biosynthetic process"/>
    <property type="evidence" value="ECO:0007669"/>
    <property type="project" value="UniProtKB-UniRule"/>
</dbReference>
<dbReference type="CDD" id="cd11592">
    <property type="entry name" value="Agmatinase_PAH"/>
    <property type="match status" value="1"/>
</dbReference>
<dbReference type="FunFam" id="3.40.800.10:FF:000001">
    <property type="entry name" value="Agmatinase"/>
    <property type="match status" value="1"/>
</dbReference>
<dbReference type="Gene3D" id="3.40.800.10">
    <property type="entry name" value="Ureohydrolase domain"/>
    <property type="match status" value="1"/>
</dbReference>
<dbReference type="HAMAP" id="MF_01418">
    <property type="entry name" value="SpeB"/>
    <property type="match status" value="1"/>
</dbReference>
<dbReference type="InterPro" id="IPR023694">
    <property type="entry name" value="Agmatinase"/>
</dbReference>
<dbReference type="InterPro" id="IPR005925">
    <property type="entry name" value="Agmatinase-rel"/>
</dbReference>
<dbReference type="InterPro" id="IPR006035">
    <property type="entry name" value="Ureohydrolase"/>
</dbReference>
<dbReference type="InterPro" id="IPR023696">
    <property type="entry name" value="Ureohydrolase_dom_sf"/>
</dbReference>
<dbReference type="InterPro" id="IPR020855">
    <property type="entry name" value="Ureohydrolase_Mn_BS"/>
</dbReference>
<dbReference type="NCBIfam" id="TIGR01230">
    <property type="entry name" value="agmatinase"/>
    <property type="match status" value="1"/>
</dbReference>
<dbReference type="NCBIfam" id="NF002564">
    <property type="entry name" value="PRK02190.1"/>
    <property type="match status" value="1"/>
</dbReference>
<dbReference type="PANTHER" id="PTHR11358">
    <property type="entry name" value="ARGINASE/AGMATINASE"/>
    <property type="match status" value="1"/>
</dbReference>
<dbReference type="PANTHER" id="PTHR11358:SF26">
    <property type="entry name" value="GUANIDINO ACID HYDROLASE, MITOCHONDRIAL"/>
    <property type="match status" value="1"/>
</dbReference>
<dbReference type="Pfam" id="PF00491">
    <property type="entry name" value="Arginase"/>
    <property type="match status" value="1"/>
</dbReference>
<dbReference type="PIRSF" id="PIRSF036979">
    <property type="entry name" value="Arginase"/>
    <property type="match status" value="1"/>
</dbReference>
<dbReference type="SUPFAM" id="SSF52768">
    <property type="entry name" value="Arginase/deacetylase"/>
    <property type="match status" value="1"/>
</dbReference>
<dbReference type="PROSITE" id="PS01053">
    <property type="entry name" value="ARGINASE_1"/>
    <property type="match status" value="1"/>
</dbReference>
<dbReference type="PROSITE" id="PS51409">
    <property type="entry name" value="ARGINASE_2"/>
    <property type="match status" value="1"/>
</dbReference>
<feature type="chain" id="PRO_1000024278" description="Agmatinase">
    <location>
        <begin position="1"/>
        <end position="306"/>
    </location>
</feature>
<feature type="binding site" evidence="1">
    <location>
        <position position="126"/>
    </location>
    <ligand>
        <name>Mn(2+)</name>
        <dbReference type="ChEBI" id="CHEBI:29035"/>
    </ligand>
</feature>
<feature type="binding site" evidence="1">
    <location>
        <position position="149"/>
    </location>
    <ligand>
        <name>Mn(2+)</name>
        <dbReference type="ChEBI" id="CHEBI:29035"/>
    </ligand>
</feature>
<feature type="binding site" evidence="1">
    <location>
        <position position="151"/>
    </location>
    <ligand>
        <name>Mn(2+)</name>
        <dbReference type="ChEBI" id="CHEBI:29035"/>
    </ligand>
</feature>
<feature type="binding site" evidence="1">
    <location>
        <position position="153"/>
    </location>
    <ligand>
        <name>Mn(2+)</name>
        <dbReference type="ChEBI" id="CHEBI:29035"/>
    </ligand>
</feature>
<feature type="binding site" evidence="1">
    <location>
        <position position="230"/>
    </location>
    <ligand>
        <name>Mn(2+)</name>
        <dbReference type="ChEBI" id="CHEBI:29035"/>
    </ligand>
</feature>
<feature type="binding site" evidence="1">
    <location>
        <position position="232"/>
    </location>
    <ligand>
        <name>Mn(2+)</name>
        <dbReference type="ChEBI" id="CHEBI:29035"/>
    </ligand>
</feature>
<comment type="function">
    <text evidence="1">Catalyzes the formation of putrescine from agmatine.</text>
</comment>
<comment type="catalytic activity">
    <reaction evidence="1">
        <text>agmatine + H2O = urea + putrescine</text>
        <dbReference type="Rhea" id="RHEA:13929"/>
        <dbReference type="ChEBI" id="CHEBI:15377"/>
        <dbReference type="ChEBI" id="CHEBI:16199"/>
        <dbReference type="ChEBI" id="CHEBI:58145"/>
        <dbReference type="ChEBI" id="CHEBI:326268"/>
        <dbReference type="EC" id="3.5.3.11"/>
    </reaction>
</comment>
<comment type="cofactor">
    <cofactor evidence="1">
        <name>Mn(2+)</name>
        <dbReference type="ChEBI" id="CHEBI:29035"/>
    </cofactor>
</comment>
<comment type="pathway">
    <text evidence="1">Amine and polyamine biosynthesis; putrescine biosynthesis via agmatine pathway; putrescine from agmatine: step 1/1.</text>
</comment>
<comment type="similarity">
    <text evidence="1">Belongs to the arginase family. Agmatinase subfamily.</text>
</comment>
<protein>
    <recommendedName>
        <fullName evidence="1">Agmatinase</fullName>
        <ecNumber evidence="1">3.5.3.11</ecNumber>
    </recommendedName>
    <alternativeName>
        <fullName evidence="1">Agmatine ureohydrolase</fullName>
        <shortName evidence="1">AUH</shortName>
    </alternativeName>
</protein>
<name>SPEB_ECOK1</name>
<sequence length="306" mass="33571">MSTLGHQYDNSLVSNAFGFLRLPMNFQPYDSDADWVITGVPFDMATSGRAGGRHGPAAIRQVSTNLAWEHNRFPWNFDMRERLNVVDCGDLVYAFGDAREMSEKLQAHAEKLLAAGKRMLSFGGDHFVTLPLLRAHAKHFGKMALVHFDAHTDTYANGCEFDHGTMFYTAPKEGLIDPNHSVQIGIRTEFDKDNGFTVLDACQVNDRSVDDIIAQVKQIVGDMPVYLTFDIDCLDPAFAPGTGTPVIGGLTSDRAIKLVRGLKDLNIVGMDVVEVAPAYDQSEITALAAATLALEMLYIQAAKKGE</sequence>
<gene>
    <name evidence="1" type="primary">speB</name>
    <name type="ordered locus">Ecok1_28710</name>
    <name type="ORF">APECO1_3592</name>
</gene>
<keyword id="KW-0378">Hydrolase</keyword>
<keyword id="KW-0464">Manganese</keyword>
<keyword id="KW-0479">Metal-binding</keyword>
<keyword id="KW-0620">Polyamine biosynthesis</keyword>
<keyword id="KW-0661">Putrescine biosynthesis</keyword>
<keyword id="KW-1185">Reference proteome</keyword>
<keyword id="KW-0745">Spermidine biosynthesis</keyword>
<accession>A1AFC5</accession>
<evidence type="ECO:0000255" key="1">
    <source>
        <dbReference type="HAMAP-Rule" id="MF_01418"/>
    </source>
</evidence>
<reference key="1">
    <citation type="journal article" date="2007" name="J. Bacteriol.">
        <title>The genome sequence of avian pathogenic Escherichia coli strain O1:K1:H7 shares strong similarities with human extraintestinal pathogenic E. coli genomes.</title>
        <authorList>
            <person name="Johnson T.J."/>
            <person name="Kariyawasam S."/>
            <person name="Wannemuehler Y."/>
            <person name="Mangiamele P."/>
            <person name="Johnson S.J."/>
            <person name="Doetkott C."/>
            <person name="Skyberg J.A."/>
            <person name="Lynne A.M."/>
            <person name="Johnson J.R."/>
            <person name="Nolan L.K."/>
        </authorList>
    </citation>
    <scope>NUCLEOTIDE SEQUENCE [LARGE SCALE GENOMIC DNA]</scope>
</reference>
<organism>
    <name type="scientific">Escherichia coli O1:K1 / APEC</name>
    <dbReference type="NCBI Taxonomy" id="405955"/>
    <lineage>
        <taxon>Bacteria</taxon>
        <taxon>Pseudomonadati</taxon>
        <taxon>Pseudomonadota</taxon>
        <taxon>Gammaproteobacteria</taxon>
        <taxon>Enterobacterales</taxon>
        <taxon>Enterobacteriaceae</taxon>
        <taxon>Escherichia</taxon>
    </lineage>
</organism>